<dbReference type="EMBL" id="AM167904">
    <property type="protein sequence ID" value="CAJ49342.1"/>
    <property type="molecule type" value="Genomic_DNA"/>
</dbReference>
<dbReference type="RefSeq" id="WP_012417403.1">
    <property type="nucleotide sequence ID" value="NC_010645.1"/>
</dbReference>
<dbReference type="SMR" id="Q2L162"/>
<dbReference type="STRING" id="360910.BAV1734"/>
<dbReference type="KEGG" id="bav:BAV1734"/>
<dbReference type="eggNOG" id="COG0052">
    <property type="taxonomic scope" value="Bacteria"/>
</dbReference>
<dbReference type="HOGENOM" id="CLU_040318_1_2_4"/>
<dbReference type="OrthoDB" id="9808036at2"/>
<dbReference type="Proteomes" id="UP000001977">
    <property type="component" value="Chromosome"/>
</dbReference>
<dbReference type="GO" id="GO:0022627">
    <property type="term" value="C:cytosolic small ribosomal subunit"/>
    <property type="evidence" value="ECO:0007669"/>
    <property type="project" value="TreeGrafter"/>
</dbReference>
<dbReference type="GO" id="GO:0003735">
    <property type="term" value="F:structural constituent of ribosome"/>
    <property type="evidence" value="ECO:0007669"/>
    <property type="project" value="InterPro"/>
</dbReference>
<dbReference type="GO" id="GO:0006412">
    <property type="term" value="P:translation"/>
    <property type="evidence" value="ECO:0007669"/>
    <property type="project" value="UniProtKB-UniRule"/>
</dbReference>
<dbReference type="CDD" id="cd01425">
    <property type="entry name" value="RPS2"/>
    <property type="match status" value="1"/>
</dbReference>
<dbReference type="FunFam" id="1.10.287.610:FF:000001">
    <property type="entry name" value="30S ribosomal protein S2"/>
    <property type="match status" value="1"/>
</dbReference>
<dbReference type="Gene3D" id="3.40.50.10490">
    <property type="entry name" value="Glucose-6-phosphate isomerase like protein, domain 1"/>
    <property type="match status" value="1"/>
</dbReference>
<dbReference type="Gene3D" id="1.10.287.610">
    <property type="entry name" value="Helix hairpin bin"/>
    <property type="match status" value="1"/>
</dbReference>
<dbReference type="HAMAP" id="MF_00291_B">
    <property type="entry name" value="Ribosomal_uS2_B"/>
    <property type="match status" value="1"/>
</dbReference>
<dbReference type="InterPro" id="IPR001865">
    <property type="entry name" value="Ribosomal_uS2"/>
</dbReference>
<dbReference type="InterPro" id="IPR005706">
    <property type="entry name" value="Ribosomal_uS2_bac/mit/plastid"/>
</dbReference>
<dbReference type="InterPro" id="IPR018130">
    <property type="entry name" value="Ribosomal_uS2_CS"/>
</dbReference>
<dbReference type="InterPro" id="IPR023591">
    <property type="entry name" value="Ribosomal_uS2_flav_dom_sf"/>
</dbReference>
<dbReference type="NCBIfam" id="TIGR01011">
    <property type="entry name" value="rpsB_bact"/>
    <property type="match status" value="1"/>
</dbReference>
<dbReference type="PANTHER" id="PTHR12534">
    <property type="entry name" value="30S RIBOSOMAL PROTEIN S2 PROKARYOTIC AND ORGANELLAR"/>
    <property type="match status" value="1"/>
</dbReference>
<dbReference type="PANTHER" id="PTHR12534:SF0">
    <property type="entry name" value="SMALL RIBOSOMAL SUBUNIT PROTEIN US2M"/>
    <property type="match status" value="1"/>
</dbReference>
<dbReference type="Pfam" id="PF00318">
    <property type="entry name" value="Ribosomal_S2"/>
    <property type="match status" value="1"/>
</dbReference>
<dbReference type="PRINTS" id="PR00395">
    <property type="entry name" value="RIBOSOMALS2"/>
</dbReference>
<dbReference type="SUPFAM" id="SSF52313">
    <property type="entry name" value="Ribosomal protein S2"/>
    <property type="match status" value="1"/>
</dbReference>
<dbReference type="PROSITE" id="PS00962">
    <property type="entry name" value="RIBOSOMAL_S2_1"/>
    <property type="match status" value="1"/>
</dbReference>
<comment type="similarity">
    <text evidence="1">Belongs to the universal ribosomal protein uS2 family.</text>
</comment>
<name>RS2_BORA1</name>
<feature type="chain" id="PRO_1000003899" description="Small ribosomal subunit protein uS2">
    <location>
        <begin position="1"/>
        <end position="249"/>
    </location>
</feature>
<protein>
    <recommendedName>
        <fullName evidence="1">Small ribosomal subunit protein uS2</fullName>
    </recommendedName>
    <alternativeName>
        <fullName evidence="2">30S ribosomal protein S2</fullName>
    </alternativeName>
</protein>
<reference key="1">
    <citation type="journal article" date="2006" name="J. Bacteriol.">
        <title>Comparison of the genome sequence of the poultry pathogen Bordetella avium with those of B. bronchiseptica, B. pertussis, and B. parapertussis reveals extensive diversity in surface structures associated with host interaction.</title>
        <authorList>
            <person name="Sebaihia M."/>
            <person name="Preston A."/>
            <person name="Maskell D.J."/>
            <person name="Kuzmiak H."/>
            <person name="Connell T.D."/>
            <person name="King N.D."/>
            <person name="Orndorff P.E."/>
            <person name="Miyamoto D.M."/>
            <person name="Thomson N.R."/>
            <person name="Harris D."/>
            <person name="Goble A."/>
            <person name="Lord A."/>
            <person name="Murphy L."/>
            <person name="Quail M.A."/>
            <person name="Rutter S."/>
            <person name="Squares R."/>
            <person name="Squares S."/>
            <person name="Woodward J."/>
            <person name="Parkhill J."/>
            <person name="Temple L.M."/>
        </authorList>
    </citation>
    <scope>NUCLEOTIDE SEQUENCE [LARGE SCALE GENOMIC DNA]</scope>
    <source>
        <strain>197N</strain>
    </source>
</reference>
<sequence length="249" mass="27553">MSLMREMLEAGVHFGHQTRYWNPKMAPYIFGHRNKIHIINLEQTVAKYQEATKFVKQLAARGGNILFVGTKRAARELVATEAERCGMPFVDARWLGGMLTNFKTVKSSIKRLKEMEVMVADGSVERLTKKEGLLFQRELDKLNKAIGGIKDMNGLPDALFVIDVGYHKIAVAEARTLGIPVVAVVDTNHSPDGVDYIIPGNDDSARAIALYAKGIADAVLEGREQNLNGLVEEIVEGEEEFVEVQDGQA</sequence>
<accession>Q2L162</accession>
<organism>
    <name type="scientific">Bordetella avium (strain 197N)</name>
    <dbReference type="NCBI Taxonomy" id="360910"/>
    <lineage>
        <taxon>Bacteria</taxon>
        <taxon>Pseudomonadati</taxon>
        <taxon>Pseudomonadota</taxon>
        <taxon>Betaproteobacteria</taxon>
        <taxon>Burkholderiales</taxon>
        <taxon>Alcaligenaceae</taxon>
        <taxon>Bordetella</taxon>
    </lineage>
</organism>
<evidence type="ECO:0000255" key="1">
    <source>
        <dbReference type="HAMAP-Rule" id="MF_00291"/>
    </source>
</evidence>
<evidence type="ECO:0000305" key="2"/>
<proteinExistence type="inferred from homology"/>
<keyword id="KW-1185">Reference proteome</keyword>
<keyword id="KW-0687">Ribonucleoprotein</keyword>
<keyword id="KW-0689">Ribosomal protein</keyword>
<gene>
    <name evidence="1" type="primary">rpsB</name>
    <name type="ordered locus">BAV1734</name>
</gene>